<sequence length="287" mass="32869">MPPPPRTALLAASSRCLKCYEIGLKYASRNFSALNRPLPNYPGHVPLNRIERGVLAIGSAFGSLINPYRHDLIAALGEATATPYFIYRLRDAMLSNPTGRRILRDRPRITSETLKLPYLRNLPENSVGWTYAKWLDKEGVTPDSRDSVQYIDDEECAYVMQRYRECHDFYHAVTGLPTMVEGELALKAFEFLNTVLPMTGLSLAAVVRLKPAERERFFKLHLPWAVRSGLSSEELINVYWEEQLERNVDDLRTELGIETPPDLREIRRMMRQQEKRAKEQQAQGSSS</sequence>
<keyword id="KW-0456">Lyase</keyword>
<keyword id="KW-0472">Membrane</keyword>
<keyword id="KW-0479">Metal-binding</keyword>
<keyword id="KW-0496">Mitochondrion</keyword>
<keyword id="KW-0999">Mitochondrion inner membrane</keyword>
<keyword id="KW-1185">Reference proteome</keyword>
<keyword id="KW-0831">Ubiquinone biosynthesis</keyword>
<keyword id="KW-0862">Zinc</keyword>
<evidence type="ECO:0000255" key="1">
    <source>
        <dbReference type="HAMAP-Rule" id="MF_03111"/>
    </source>
</evidence>
<protein>
    <recommendedName>
        <fullName evidence="1">Ubiquinone biosynthesis protein coq4, mitochondrial</fullName>
    </recommendedName>
    <alternativeName>
        <fullName>4-hydroxy-3-methoxy-5-polyprenylbenzoate decarboxylase</fullName>
        <ecNumber evidence="1">4.1.1.130</ecNumber>
    </alternativeName>
    <alternativeName>
        <fullName evidence="1">Coenzyme Q biosynthesis protein 4</fullName>
    </alternativeName>
</protein>
<feature type="chain" id="PRO_0000388127" description="Ubiquinone biosynthesis protein coq4, mitochondrial">
    <location>
        <begin position="1"/>
        <end position="287"/>
    </location>
</feature>
<feature type="binding site" evidence="1">
    <location>
        <position position="167"/>
    </location>
    <ligand>
        <name>Zn(2+)</name>
        <dbReference type="ChEBI" id="CHEBI:29105"/>
    </ligand>
</feature>
<feature type="binding site" evidence="1">
    <location>
        <position position="168"/>
    </location>
    <ligand>
        <name>Zn(2+)</name>
        <dbReference type="ChEBI" id="CHEBI:29105"/>
    </ligand>
</feature>
<feature type="binding site" evidence="1">
    <location>
        <position position="171"/>
    </location>
    <ligand>
        <name>Zn(2+)</name>
        <dbReference type="ChEBI" id="CHEBI:29105"/>
    </ligand>
</feature>
<feature type="binding site" evidence="1">
    <location>
        <position position="183"/>
    </location>
    <ligand>
        <name>Zn(2+)</name>
        <dbReference type="ChEBI" id="CHEBI:29105"/>
    </ligand>
</feature>
<dbReference type="EC" id="4.1.1.130" evidence="1"/>
<dbReference type="EMBL" id="DS995905">
    <property type="protein sequence ID" value="EEA19582.1"/>
    <property type="molecule type" value="Genomic_DNA"/>
</dbReference>
<dbReference type="RefSeq" id="XP_002152519.1">
    <property type="nucleotide sequence ID" value="XM_002152483.1"/>
</dbReference>
<dbReference type="SMR" id="B6QTE1"/>
<dbReference type="STRING" id="441960.B6QTE1"/>
<dbReference type="VEuPathDB" id="FungiDB:PMAA_003700"/>
<dbReference type="HOGENOM" id="CLU_061241_0_0_1"/>
<dbReference type="OrthoDB" id="6372at28568"/>
<dbReference type="PhylomeDB" id="B6QTE1"/>
<dbReference type="UniPathway" id="UPA00232"/>
<dbReference type="Proteomes" id="UP000001294">
    <property type="component" value="Unassembled WGS sequence"/>
</dbReference>
<dbReference type="GO" id="GO:0031314">
    <property type="term" value="C:extrinsic component of mitochondrial inner membrane"/>
    <property type="evidence" value="ECO:0007669"/>
    <property type="project" value="UniProtKB-UniRule"/>
</dbReference>
<dbReference type="GO" id="GO:0006744">
    <property type="term" value="P:ubiquinone biosynthetic process"/>
    <property type="evidence" value="ECO:0007669"/>
    <property type="project" value="UniProtKB-UniRule"/>
</dbReference>
<dbReference type="HAMAP" id="MF_03111">
    <property type="entry name" value="Coq4"/>
    <property type="match status" value="1"/>
</dbReference>
<dbReference type="InterPro" id="IPR007715">
    <property type="entry name" value="Coq4"/>
</dbReference>
<dbReference type="InterPro" id="IPR027540">
    <property type="entry name" value="Coq4_euk"/>
</dbReference>
<dbReference type="PANTHER" id="PTHR12922">
    <property type="entry name" value="UBIQUINONE BIOSYNTHESIS PROTEIN"/>
    <property type="match status" value="1"/>
</dbReference>
<dbReference type="PANTHER" id="PTHR12922:SF7">
    <property type="entry name" value="UBIQUINONE BIOSYNTHESIS PROTEIN COQ4 HOMOLOG, MITOCHONDRIAL"/>
    <property type="match status" value="1"/>
</dbReference>
<dbReference type="Pfam" id="PF05019">
    <property type="entry name" value="Coq4"/>
    <property type="match status" value="1"/>
</dbReference>
<proteinExistence type="inferred from homology"/>
<comment type="function">
    <text evidence="1">Lyase that catalyzes the C1-decarboxylation of 4-hydroxy-3-methoxy-5-(all-trans-polyprenyl)benzoic acid into 2-methoxy-6-(all-trans-polyprenyl)phenol during ubiquinone biosynthesis.</text>
</comment>
<comment type="catalytic activity">
    <reaction evidence="1">
        <text>a 4-hydroxy-3-methoxy-5-(all-trans-polyprenyl)benzoate + H(+) = a 2-methoxy-6-(all-trans-polyprenyl)phenol + CO2</text>
        <dbReference type="Rhea" id="RHEA:81179"/>
        <dbReference type="Rhea" id="RHEA-COMP:9551"/>
        <dbReference type="Rhea" id="RHEA-COMP:10931"/>
        <dbReference type="ChEBI" id="CHEBI:15378"/>
        <dbReference type="ChEBI" id="CHEBI:16526"/>
        <dbReference type="ChEBI" id="CHEBI:62731"/>
        <dbReference type="ChEBI" id="CHEBI:84443"/>
        <dbReference type="EC" id="4.1.1.130"/>
    </reaction>
</comment>
<comment type="cofactor">
    <cofactor evidence="1">
        <name>Zn(2+)</name>
        <dbReference type="ChEBI" id="CHEBI:29105"/>
    </cofactor>
</comment>
<comment type="pathway">
    <text evidence="1">Cofactor biosynthesis; ubiquinone biosynthesis.</text>
</comment>
<comment type="subunit">
    <text evidence="1">Component of a multi-subunit COQ enzyme complex, composed of at least coq3, coq4, coq5, coq6, coq7 and coq9.</text>
</comment>
<comment type="subcellular location">
    <subcellularLocation>
        <location evidence="1">Mitochondrion inner membrane</location>
        <topology evidence="1">Peripheral membrane protein</topology>
        <orientation evidence="1">Matrix side</orientation>
    </subcellularLocation>
</comment>
<comment type="miscellaneous">
    <text evidence="1">This protein may be expected to contain an N-terminal transit peptide but none has been predicted.</text>
</comment>
<comment type="similarity">
    <text evidence="1">Belongs to the COQ4 family.</text>
</comment>
<name>COQ4_TALMQ</name>
<reference key="1">
    <citation type="journal article" date="2015" name="Genome Announc.">
        <title>Genome sequence of the AIDS-associated pathogen Penicillium marneffei (ATCC18224) and its near taxonomic relative Talaromyces stipitatus (ATCC10500).</title>
        <authorList>
            <person name="Nierman W.C."/>
            <person name="Fedorova-Abrams N.D."/>
            <person name="Andrianopoulos A."/>
        </authorList>
    </citation>
    <scope>NUCLEOTIDE SEQUENCE [LARGE SCALE GENOMIC DNA]</scope>
    <source>
        <strain>ATCC 18224 / CBS 334.59 / QM 7333</strain>
    </source>
</reference>
<accession>B6QTE1</accession>
<organism>
    <name type="scientific">Talaromyces marneffei (strain ATCC 18224 / CBS 334.59 / QM 7333)</name>
    <name type="common">Penicillium marneffei</name>
    <dbReference type="NCBI Taxonomy" id="441960"/>
    <lineage>
        <taxon>Eukaryota</taxon>
        <taxon>Fungi</taxon>
        <taxon>Dikarya</taxon>
        <taxon>Ascomycota</taxon>
        <taxon>Pezizomycotina</taxon>
        <taxon>Eurotiomycetes</taxon>
        <taxon>Eurotiomycetidae</taxon>
        <taxon>Eurotiales</taxon>
        <taxon>Trichocomaceae</taxon>
        <taxon>Talaromyces</taxon>
        <taxon>Talaromyces sect. Talaromyces</taxon>
    </lineage>
</organism>
<gene>
    <name type="primary">coq4</name>
    <name type="ORF">PMAA_003700</name>
</gene>